<sequence>MTKRNKKNNKLYKNIKAIKLSIASNDTILNWSEGEVTKAETINYKSLKPEPGGLFDEAIFGPVKDYECACGKFKKIKYRGVRCDRCGVWVTESIVRRERMGHIALVSPVAHIWMSKELPSPSKISLVLNISYKEVEQVLYFVNYIVLDTGKIKDPKIMPFKFKEVLDLAGKGSLTTRQKMRRVIGYIFRNLIKNRSSEDYRKGKIFYESLKNSSLPFSLNDAFNYIKKYTGFRVGIGAEAILELLNKIDLNYEFSKLNDALRKAKKDSVEDAKVKKILRQLETISWFRNSKLHPKNMILHTVPVIPPDIRPIIQLDGAKFTTSDINNFYRRVIIRNDRLRRILEDGTVPAIVVNNEKRLLQESVDALFDNSSRHKPALSKDKRSLKSLTDRLKGKQGLFRHNLLGKRVDYSGRSVIVVGPELKMYEVGIPALMILKLFKPFIIHGLINKFDSNGNEIRPIASSIRQAEDMIKNQDDLIWGIVYDVIKDRPVLLNRAPTLHRLGIQAFEPRIVDGKAIRLHPLVTTAFNADFDGDQMAVHVPLSENAVNEARAILLASKHILGLKDGRPIVTPTQDMVLGNYYLTTERKGQTGEGIIFGTVHEARAAYEAGKVHLHAIVGISTKAFPNKHFEAQGTLITTVGKIIFNDVLGDNIPYINEGEFDEHACPQKFIVPPSGDVRAAIAAHQVLPAFGKKVISKLIDLLYTVVEFKDLPRILENIKALGFKYSTHSSTTVSVFDIPKYSNKQQYFDEADQQVLKYKQFYNKGLLTDDERYKRVVKLWNGVKEKVSSEIQDLIKREEYRDNSIVVMADSGARGNISNFTQLFGMRGLMSKSFNYERNNQSKIIKDTIEVPIKHSFLEGLTINEYFNSSYGARKGMTDTAMKTAKSGYMTRKLVDATHELIINHDDCGTRKGIVVEAIVETKTRSLVESLFDRIVNRYTIGPILDPETKAEIVPANSLITQELAKQICATSIKQVLVRSVIYCERENGVCQYCFGVDLSTGKLVELGTAVGVIAAQSIGEPGTQLTMRTFHTGGVSTENNLAQGFERLKQIFEVVAPKDYERCVISEVKGVVKSITTTQNAQEVLIESSVDERTYSIPFSAQLRVKVGDAVELGSKITEGSIDIRQLLRVAGIQRVRQYMIVEIQKVYRIQGIEIADKYVEIIIRQLTSLLQVTDAGSSNLFVGQLVHSHHLNELNKSLLLSGKMPVIAINQVFGIDEAASKSNSFLSAASFQDTKKILTDAAVKTQVDYLLGLKENVIIGGKIPAGTGFLTDEELAYLGAKTVQEEY</sequence>
<gene>
    <name evidence="1" type="primary">rpoC</name>
    <name type="ordered locus">MPN_515</name>
    <name type="ORF">MP327</name>
</gene>
<reference key="1">
    <citation type="journal article" date="1996" name="Nucleic Acids Res.">
        <title>Complete sequence analysis of the genome of the bacterium Mycoplasma pneumoniae.</title>
        <authorList>
            <person name="Himmelreich R."/>
            <person name="Hilbert H."/>
            <person name="Plagens H."/>
            <person name="Pirkl E."/>
            <person name="Li B.-C."/>
            <person name="Herrmann R."/>
        </authorList>
    </citation>
    <scope>NUCLEOTIDE SEQUENCE [LARGE SCALE GENOMIC DNA]</scope>
    <source>
        <strain>ATCC 29342 / M129 / Subtype 1</strain>
    </source>
</reference>
<organism>
    <name type="scientific">Mycoplasma pneumoniae (strain ATCC 29342 / M129 / Subtype 1)</name>
    <name type="common">Mycoplasmoides pneumoniae</name>
    <dbReference type="NCBI Taxonomy" id="272634"/>
    <lineage>
        <taxon>Bacteria</taxon>
        <taxon>Bacillati</taxon>
        <taxon>Mycoplasmatota</taxon>
        <taxon>Mycoplasmoidales</taxon>
        <taxon>Mycoplasmoidaceae</taxon>
        <taxon>Mycoplasmoides</taxon>
    </lineage>
</organism>
<name>RPOC_MYCPN</name>
<feature type="chain" id="PRO_0000067763" description="DNA-directed RNA polymerase subunit beta'">
    <location>
        <begin position="1"/>
        <end position="1290"/>
    </location>
</feature>
<feature type="binding site" evidence="1">
    <location>
        <position position="68"/>
    </location>
    <ligand>
        <name>Zn(2+)</name>
        <dbReference type="ChEBI" id="CHEBI:29105"/>
        <label>1</label>
    </ligand>
</feature>
<feature type="binding site" evidence="1">
    <location>
        <position position="70"/>
    </location>
    <ligand>
        <name>Zn(2+)</name>
        <dbReference type="ChEBI" id="CHEBI:29105"/>
        <label>1</label>
    </ligand>
</feature>
<feature type="binding site" evidence="1">
    <location>
        <position position="83"/>
    </location>
    <ligand>
        <name>Zn(2+)</name>
        <dbReference type="ChEBI" id="CHEBI:29105"/>
        <label>1</label>
    </ligand>
</feature>
<feature type="binding site" evidence="1">
    <location>
        <position position="86"/>
    </location>
    <ligand>
        <name>Zn(2+)</name>
        <dbReference type="ChEBI" id="CHEBI:29105"/>
        <label>1</label>
    </ligand>
</feature>
<feature type="binding site" evidence="1">
    <location>
        <position position="530"/>
    </location>
    <ligand>
        <name>Mg(2+)</name>
        <dbReference type="ChEBI" id="CHEBI:18420"/>
    </ligand>
</feature>
<feature type="binding site" evidence="1">
    <location>
        <position position="532"/>
    </location>
    <ligand>
        <name>Mg(2+)</name>
        <dbReference type="ChEBI" id="CHEBI:18420"/>
    </ligand>
</feature>
<feature type="binding site" evidence="1">
    <location>
        <position position="534"/>
    </location>
    <ligand>
        <name>Mg(2+)</name>
        <dbReference type="ChEBI" id="CHEBI:18420"/>
    </ligand>
</feature>
<feature type="binding site" evidence="1">
    <location>
        <position position="909"/>
    </location>
    <ligand>
        <name>Zn(2+)</name>
        <dbReference type="ChEBI" id="CHEBI:29105"/>
        <label>2</label>
    </ligand>
</feature>
<feature type="binding site" evidence="1">
    <location>
        <position position="985"/>
    </location>
    <ligand>
        <name>Zn(2+)</name>
        <dbReference type="ChEBI" id="CHEBI:29105"/>
        <label>2</label>
    </ligand>
</feature>
<feature type="binding site" evidence="1">
    <location>
        <position position="992"/>
    </location>
    <ligand>
        <name>Zn(2+)</name>
        <dbReference type="ChEBI" id="CHEBI:29105"/>
        <label>2</label>
    </ligand>
</feature>
<feature type="binding site" evidence="1">
    <location>
        <position position="995"/>
    </location>
    <ligand>
        <name>Zn(2+)</name>
        <dbReference type="ChEBI" id="CHEBI:29105"/>
        <label>2</label>
    </ligand>
</feature>
<proteinExistence type="inferred from homology"/>
<protein>
    <recommendedName>
        <fullName evidence="1">DNA-directed RNA polymerase subunit beta'</fullName>
        <shortName evidence="1">RNAP subunit beta'</shortName>
        <ecNumber evidence="1">2.7.7.6</ecNumber>
    </recommendedName>
    <alternativeName>
        <fullName evidence="1">RNA polymerase subunit beta'</fullName>
    </alternativeName>
    <alternativeName>
        <fullName evidence="1">Transcriptase subunit beta'</fullName>
    </alternativeName>
</protein>
<keyword id="KW-0240">DNA-directed RNA polymerase</keyword>
<keyword id="KW-0460">Magnesium</keyword>
<keyword id="KW-0479">Metal-binding</keyword>
<keyword id="KW-0548">Nucleotidyltransferase</keyword>
<keyword id="KW-1185">Reference proteome</keyword>
<keyword id="KW-0804">Transcription</keyword>
<keyword id="KW-0808">Transferase</keyword>
<keyword id="KW-0862">Zinc</keyword>
<accession>P75271</accession>
<dbReference type="EC" id="2.7.7.6" evidence="1"/>
<dbReference type="EMBL" id="U00089">
    <property type="protein sequence ID" value="AAB95975.1"/>
    <property type="molecule type" value="Genomic_DNA"/>
</dbReference>
<dbReference type="PIR" id="S73653">
    <property type="entry name" value="S73653"/>
</dbReference>
<dbReference type="RefSeq" id="NP_110203.1">
    <property type="nucleotide sequence ID" value="NC_000912.1"/>
</dbReference>
<dbReference type="RefSeq" id="WP_010874871.1">
    <property type="nucleotide sequence ID" value="NC_000912.1"/>
</dbReference>
<dbReference type="SMR" id="P75271"/>
<dbReference type="IntAct" id="P75271">
    <property type="interactions" value="14"/>
</dbReference>
<dbReference type="STRING" id="272634.MPN_515"/>
<dbReference type="EnsemblBacteria" id="AAB95975">
    <property type="protein sequence ID" value="AAB95975"/>
    <property type="gene ID" value="MPN_515"/>
</dbReference>
<dbReference type="KEGG" id="mpn:MPN_515"/>
<dbReference type="PATRIC" id="fig|272634.6.peg.569"/>
<dbReference type="HOGENOM" id="CLU_000524_3_0_14"/>
<dbReference type="OrthoDB" id="9815296at2"/>
<dbReference type="BioCyc" id="MPNE272634:G1GJ3-845-MONOMER"/>
<dbReference type="Proteomes" id="UP000000808">
    <property type="component" value="Chromosome"/>
</dbReference>
<dbReference type="GO" id="GO:0000428">
    <property type="term" value="C:DNA-directed RNA polymerase complex"/>
    <property type="evidence" value="ECO:0007669"/>
    <property type="project" value="UniProtKB-KW"/>
</dbReference>
<dbReference type="GO" id="GO:0003677">
    <property type="term" value="F:DNA binding"/>
    <property type="evidence" value="ECO:0007669"/>
    <property type="project" value="UniProtKB-UniRule"/>
</dbReference>
<dbReference type="GO" id="GO:0003899">
    <property type="term" value="F:DNA-directed RNA polymerase activity"/>
    <property type="evidence" value="ECO:0007669"/>
    <property type="project" value="UniProtKB-UniRule"/>
</dbReference>
<dbReference type="GO" id="GO:0000287">
    <property type="term" value="F:magnesium ion binding"/>
    <property type="evidence" value="ECO:0007669"/>
    <property type="project" value="UniProtKB-UniRule"/>
</dbReference>
<dbReference type="GO" id="GO:0008270">
    <property type="term" value="F:zinc ion binding"/>
    <property type="evidence" value="ECO:0007669"/>
    <property type="project" value="UniProtKB-UniRule"/>
</dbReference>
<dbReference type="GO" id="GO:0006351">
    <property type="term" value="P:DNA-templated transcription"/>
    <property type="evidence" value="ECO:0007669"/>
    <property type="project" value="UniProtKB-UniRule"/>
</dbReference>
<dbReference type="CDD" id="cd02655">
    <property type="entry name" value="RNAP_beta'_C"/>
    <property type="match status" value="1"/>
</dbReference>
<dbReference type="CDD" id="cd01609">
    <property type="entry name" value="RNAP_beta'_N"/>
    <property type="match status" value="1"/>
</dbReference>
<dbReference type="Gene3D" id="1.10.132.30">
    <property type="match status" value="1"/>
</dbReference>
<dbReference type="Gene3D" id="1.10.150.390">
    <property type="match status" value="1"/>
</dbReference>
<dbReference type="Gene3D" id="1.10.1790.20">
    <property type="match status" value="1"/>
</dbReference>
<dbReference type="Gene3D" id="1.10.40.90">
    <property type="match status" value="1"/>
</dbReference>
<dbReference type="Gene3D" id="2.40.40.20">
    <property type="match status" value="1"/>
</dbReference>
<dbReference type="Gene3D" id="2.40.50.100">
    <property type="match status" value="1"/>
</dbReference>
<dbReference type="Gene3D" id="4.10.860.120">
    <property type="entry name" value="RNA polymerase II, clamp domain"/>
    <property type="match status" value="1"/>
</dbReference>
<dbReference type="Gene3D" id="1.10.274.100">
    <property type="entry name" value="RNA polymerase Rpb1, domain 3"/>
    <property type="match status" value="2"/>
</dbReference>
<dbReference type="HAMAP" id="MF_01322">
    <property type="entry name" value="RNApol_bact_RpoC"/>
    <property type="match status" value="1"/>
</dbReference>
<dbReference type="InterPro" id="IPR045867">
    <property type="entry name" value="DNA-dir_RpoC_beta_prime"/>
</dbReference>
<dbReference type="InterPro" id="IPR012754">
    <property type="entry name" value="DNA-dir_RpoC_beta_prime_bact"/>
</dbReference>
<dbReference type="InterPro" id="IPR000722">
    <property type="entry name" value="RNA_pol_asu"/>
</dbReference>
<dbReference type="InterPro" id="IPR006592">
    <property type="entry name" value="RNA_pol_N"/>
</dbReference>
<dbReference type="InterPro" id="IPR007080">
    <property type="entry name" value="RNA_pol_Rpb1_1"/>
</dbReference>
<dbReference type="InterPro" id="IPR007066">
    <property type="entry name" value="RNA_pol_Rpb1_3"/>
</dbReference>
<dbReference type="InterPro" id="IPR042102">
    <property type="entry name" value="RNA_pol_Rpb1_3_sf"/>
</dbReference>
<dbReference type="InterPro" id="IPR007083">
    <property type="entry name" value="RNA_pol_Rpb1_4"/>
</dbReference>
<dbReference type="InterPro" id="IPR007081">
    <property type="entry name" value="RNA_pol_Rpb1_5"/>
</dbReference>
<dbReference type="InterPro" id="IPR044893">
    <property type="entry name" value="RNA_pol_Rpb1_clamp_domain"/>
</dbReference>
<dbReference type="InterPro" id="IPR038120">
    <property type="entry name" value="Rpb1_funnel_sf"/>
</dbReference>
<dbReference type="NCBIfam" id="TIGR02386">
    <property type="entry name" value="rpoC_TIGR"/>
    <property type="match status" value="1"/>
</dbReference>
<dbReference type="PANTHER" id="PTHR19376">
    <property type="entry name" value="DNA-DIRECTED RNA POLYMERASE"/>
    <property type="match status" value="1"/>
</dbReference>
<dbReference type="PANTHER" id="PTHR19376:SF54">
    <property type="entry name" value="DNA-DIRECTED RNA POLYMERASE SUBUNIT BETA"/>
    <property type="match status" value="1"/>
</dbReference>
<dbReference type="Pfam" id="PF04997">
    <property type="entry name" value="RNA_pol_Rpb1_1"/>
    <property type="match status" value="1"/>
</dbReference>
<dbReference type="Pfam" id="PF00623">
    <property type="entry name" value="RNA_pol_Rpb1_2"/>
    <property type="match status" value="1"/>
</dbReference>
<dbReference type="Pfam" id="PF04983">
    <property type="entry name" value="RNA_pol_Rpb1_3"/>
    <property type="match status" value="1"/>
</dbReference>
<dbReference type="Pfam" id="PF05000">
    <property type="entry name" value="RNA_pol_Rpb1_4"/>
    <property type="match status" value="1"/>
</dbReference>
<dbReference type="Pfam" id="PF04998">
    <property type="entry name" value="RNA_pol_Rpb1_5"/>
    <property type="match status" value="1"/>
</dbReference>
<dbReference type="SMART" id="SM00663">
    <property type="entry name" value="RPOLA_N"/>
    <property type="match status" value="1"/>
</dbReference>
<dbReference type="SUPFAM" id="SSF64484">
    <property type="entry name" value="beta and beta-prime subunits of DNA dependent RNA-polymerase"/>
    <property type="match status" value="1"/>
</dbReference>
<evidence type="ECO:0000255" key="1">
    <source>
        <dbReference type="HAMAP-Rule" id="MF_01322"/>
    </source>
</evidence>
<comment type="function">
    <text evidence="1">DNA-dependent RNA polymerase catalyzes the transcription of DNA into RNA using the four ribonucleoside triphosphates as substrates.</text>
</comment>
<comment type="catalytic activity">
    <reaction evidence="1">
        <text>RNA(n) + a ribonucleoside 5'-triphosphate = RNA(n+1) + diphosphate</text>
        <dbReference type="Rhea" id="RHEA:21248"/>
        <dbReference type="Rhea" id="RHEA-COMP:14527"/>
        <dbReference type="Rhea" id="RHEA-COMP:17342"/>
        <dbReference type="ChEBI" id="CHEBI:33019"/>
        <dbReference type="ChEBI" id="CHEBI:61557"/>
        <dbReference type="ChEBI" id="CHEBI:140395"/>
        <dbReference type="EC" id="2.7.7.6"/>
    </reaction>
</comment>
<comment type="cofactor">
    <cofactor evidence="1">
        <name>Mg(2+)</name>
        <dbReference type="ChEBI" id="CHEBI:18420"/>
    </cofactor>
    <text evidence="1">Binds 1 Mg(2+) ion per subunit.</text>
</comment>
<comment type="cofactor">
    <cofactor evidence="1">
        <name>Zn(2+)</name>
        <dbReference type="ChEBI" id="CHEBI:29105"/>
    </cofactor>
    <text evidence="1">Binds 2 Zn(2+) ions per subunit.</text>
</comment>
<comment type="subunit">
    <text evidence="1">The RNAP catalytic core consists of 2 alpha, 1 beta, 1 beta' and 1 omega subunit. When a sigma factor is associated with the core the holoenzyme is formed, which can initiate transcription.</text>
</comment>
<comment type="similarity">
    <text evidence="1">Belongs to the RNA polymerase beta' chain family.</text>
</comment>